<comment type="function">
    <text evidence="1">An essential GTPase that binds both GDP and GTP, with rapid nucleotide exchange. Plays a role in 16S rRNA processing and 30S ribosomal subunit biogenesis and possibly also in cell cycle regulation and energy metabolism.</text>
</comment>
<comment type="subunit">
    <text evidence="1">Monomer.</text>
</comment>
<comment type="subcellular location">
    <subcellularLocation>
        <location>Cytoplasm</location>
    </subcellularLocation>
    <subcellularLocation>
        <location evidence="1">Cell inner membrane</location>
        <topology evidence="1">Peripheral membrane protein</topology>
    </subcellularLocation>
</comment>
<comment type="similarity">
    <text evidence="1 2">Belongs to the TRAFAC class TrmE-Era-EngA-EngB-Septin-like GTPase superfamily. Era GTPase family.</text>
</comment>
<accession>A7FFU0</accession>
<reference key="1">
    <citation type="journal article" date="2007" name="PLoS Genet.">
        <title>The complete genome sequence of Yersinia pseudotuberculosis IP31758, the causative agent of Far East scarlet-like fever.</title>
        <authorList>
            <person name="Eppinger M."/>
            <person name="Rosovitz M.J."/>
            <person name="Fricke W.F."/>
            <person name="Rasko D.A."/>
            <person name="Kokorina G."/>
            <person name="Fayolle C."/>
            <person name="Lindler L.E."/>
            <person name="Carniel E."/>
            <person name="Ravel J."/>
        </authorList>
    </citation>
    <scope>NUCLEOTIDE SEQUENCE [LARGE SCALE GENOMIC DNA]</scope>
    <source>
        <strain>IP 31758</strain>
    </source>
</reference>
<dbReference type="EMBL" id="CP000720">
    <property type="protein sequence ID" value="ABS47896.1"/>
    <property type="molecule type" value="Genomic_DNA"/>
</dbReference>
<dbReference type="RefSeq" id="WP_002214829.1">
    <property type="nucleotide sequence ID" value="NC_009708.1"/>
</dbReference>
<dbReference type="SMR" id="A7FFU0"/>
<dbReference type="GeneID" id="96662248"/>
<dbReference type="KEGG" id="ypi:YpsIP31758_1137"/>
<dbReference type="HOGENOM" id="CLU_038009_1_2_6"/>
<dbReference type="Proteomes" id="UP000002412">
    <property type="component" value="Chromosome"/>
</dbReference>
<dbReference type="GO" id="GO:0005829">
    <property type="term" value="C:cytosol"/>
    <property type="evidence" value="ECO:0007669"/>
    <property type="project" value="TreeGrafter"/>
</dbReference>
<dbReference type="GO" id="GO:0005886">
    <property type="term" value="C:plasma membrane"/>
    <property type="evidence" value="ECO:0007669"/>
    <property type="project" value="UniProtKB-SubCell"/>
</dbReference>
<dbReference type="GO" id="GO:0005525">
    <property type="term" value="F:GTP binding"/>
    <property type="evidence" value="ECO:0007669"/>
    <property type="project" value="UniProtKB-UniRule"/>
</dbReference>
<dbReference type="GO" id="GO:0003924">
    <property type="term" value="F:GTPase activity"/>
    <property type="evidence" value="ECO:0007669"/>
    <property type="project" value="UniProtKB-UniRule"/>
</dbReference>
<dbReference type="GO" id="GO:0043024">
    <property type="term" value="F:ribosomal small subunit binding"/>
    <property type="evidence" value="ECO:0007669"/>
    <property type="project" value="TreeGrafter"/>
</dbReference>
<dbReference type="GO" id="GO:0070181">
    <property type="term" value="F:small ribosomal subunit rRNA binding"/>
    <property type="evidence" value="ECO:0007669"/>
    <property type="project" value="UniProtKB-UniRule"/>
</dbReference>
<dbReference type="GO" id="GO:0000028">
    <property type="term" value="P:ribosomal small subunit assembly"/>
    <property type="evidence" value="ECO:0007669"/>
    <property type="project" value="TreeGrafter"/>
</dbReference>
<dbReference type="CDD" id="cd04163">
    <property type="entry name" value="Era"/>
    <property type="match status" value="1"/>
</dbReference>
<dbReference type="CDD" id="cd22534">
    <property type="entry name" value="KH-II_Era"/>
    <property type="match status" value="1"/>
</dbReference>
<dbReference type="FunFam" id="3.30.300.20:FF:000003">
    <property type="entry name" value="GTPase Era"/>
    <property type="match status" value="1"/>
</dbReference>
<dbReference type="FunFam" id="3.40.50.300:FF:000094">
    <property type="entry name" value="GTPase Era"/>
    <property type="match status" value="1"/>
</dbReference>
<dbReference type="Gene3D" id="3.30.300.20">
    <property type="match status" value="1"/>
</dbReference>
<dbReference type="Gene3D" id="3.40.50.300">
    <property type="entry name" value="P-loop containing nucleotide triphosphate hydrolases"/>
    <property type="match status" value="1"/>
</dbReference>
<dbReference type="HAMAP" id="MF_00367">
    <property type="entry name" value="GTPase_Era"/>
    <property type="match status" value="1"/>
</dbReference>
<dbReference type="InterPro" id="IPR030388">
    <property type="entry name" value="G_ERA_dom"/>
</dbReference>
<dbReference type="InterPro" id="IPR006073">
    <property type="entry name" value="GTP-bd"/>
</dbReference>
<dbReference type="InterPro" id="IPR005662">
    <property type="entry name" value="GTPase_Era-like"/>
</dbReference>
<dbReference type="InterPro" id="IPR015946">
    <property type="entry name" value="KH_dom-like_a/b"/>
</dbReference>
<dbReference type="InterPro" id="IPR004044">
    <property type="entry name" value="KH_dom_type_2"/>
</dbReference>
<dbReference type="InterPro" id="IPR009019">
    <property type="entry name" value="KH_sf_prok-type"/>
</dbReference>
<dbReference type="InterPro" id="IPR027417">
    <property type="entry name" value="P-loop_NTPase"/>
</dbReference>
<dbReference type="InterPro" id="IPR005225">
    <property type="entry name" value="Small_GTP-bd"/>
</dbReference>
<dbReference type="NCBIfam" id="TIGR00436">
    <property type="entry name" value="era"/>
    <property type="match status" value="1"/>
</dbReference>
<dbReference type="NCBIfam" id="NF000908">
    <property type="entry name" value="PRK00089.1"/>
    <property type="match status" value="1"/>
</dbReference>
<dbReference type="NCBIfam" id="TIGR00231">
    <property type="entry name" value="small_GTP"/>
    <property type="match status" value="1"/>
</dbReference>
<dbReference type="PANTHER" id="PTHR42698">
    <property type="entry name" value="GTPASE ERA"/>
    <property type="match status" value="1"/>
</dbReference>
<dbReference type="PANTHER" id="PTHR42698:SF1">
    <property type="entry name" value="GTPASE ERA, MITOCHONDRIAL"/>
    <property type="match status" value="1"/>
</dbReference>
<dbReference type="Pfam" id="PF07650">
    <property type="entry name" value="KH_2"/>
    <property type="match status" value="1"/>
</dbReference>
<dbReference type="Pfam" id="PF01926">
    <property type="entry name" value="MMR_HSR1"/>
    <property type="match status" value="1"/>
</dbReference>
<dbReference type="SUPFAM" id="SSF52540">
    <property type="entry name" value="P-loop containing nucleoside triphosphate hydrolases"/>
    <property type="match status" value="1"/>
</dbReference>
<dbReference type="SUPFAM" id="SSF54814">
    <property type="entry name" value="Prokaryotic type KH domain (KH-domain type II)"/>
    <property type="match status" value="1"/>
</dbReference>
<dbReference type="PROSITE" id="PS51713">
    <property type="entry name" value="G_ERA"/>
    <property type="match status" value="1"/>
</dbReference>
<dbReference type="PROSITE" id="PS50823">
    <property type="entry name" value="KH_TYPE_2"/>
    <property type="match status" value="1"/>
</dbReference>
<sequence>MSEVEKTYCGFIAIVGRPNVGKSTLLNELLGQKISITSRKPQTTRHRIMGIHTEGPYQAIYVDTPGLHIEEKRAINRLMNRAASSSLGDVELVIFVVEGTHWTADDEMVVNKLRSLQCPVLLAINKVDNVTDKTKLLPHMQFLSQQMNFLDVVPISAEKGMNVDTIASIVRKHMPEAEHHFPEDYITDRSQRFMASEIIREKLMRFLGEELPYSVTVEIEQFVPNERGGYNIHGLILVEREGQKKMVIGNKGSKIKVIGTEARQDMERMFEAKVHLELWVKVKSGWADDERALRSLGYTDDLK</sequence>
<organism>
    <name type="scientific">Yersinia pseudotuberculosis serotype O:1b (strain IP 31758)</name>
    <dbReference type="NCBI Taxonomy" id="349747"/>
    <lineage>
        <taxon>Bacteria</taxon>
        <taxon>Pseudomonadati</taxon>
        <taxon>Pseudomonadota</taxon>
        <taxon>Gammaproteobacteria</taxon>
        <taxon>Enterobacterales</taxon>
        <taxon>Yersiniaceae</taxon>
        <taxon>Yersinia</taxon>
    </lineage>
</organism>
<feature type="chain" id="PRO_1000079773" description="GTPase Era">
    <location>
        <begin position="1"/>
        <end position="303"/>
    </location>
</feature>
<feature type="domain" description="Era-type G" evidence="2">
    <location>
        <begin position="8"/>
        <end position="176"/>
    </location>
</feature>
<feature type="domain" description="KH type-2" evidence="1">
    <location>
        <begin position="207"/>
        <end position="284"/>
    </location>
</feature>
<feature type="region of interest" description="G1" evidence="2">
    <location>
        <begin position="16"/>
        <end position="23"/>
    </location>
</feature>
<feature type="region of interest" description="G2" evidence="2">
    <location>
        <begin position="42"/>
        <end position="46"/>
    </location>
</feature>
<feature type="region of interest" description="G3" evidence="2">
    <location>
        <begin position="63"/>
        <end position="66"/>
    </location>
</feature>
<feature type="region of interest" description="G4" evidence="2">
    <location>
        <begin position="125"/>
        <end position="128"/>
    </location>
</feature>
<feature type="region of interest" description="G5" evidence="2">
    <location>
        <begin position="155"/>
        <end position="157"/>
    </location>
</feature>
<feature type="binding site" evidence="1">
    <location>
        <begin position="16"/>
        <end position="23"/>
    </location>
    <ligand>
        <name>GTP</name>
        <dbReference type="ChEBI" id="CHEBI:37565"/>
    </ligand>
</feature>
<feature type="binding site" evidence="1">
    <location>
        <begin position="63"/>
        <end position="67"/>
    </location>
    <ligand>
        <name>GTP</name>
        <dbReference type="ChEBI" id="CHEBI:37565"/>
    </ligand>
</feature>
<feature type="binding site" evidence="1">
    <location>
        <begin position="125"/>
        <end position="128"/>
    </location>
    <ligand>
        <name>GTP</name>
        <dbReference type="ChEBI" id="CHEBI:37565"/>
    </ligand>
</feature>
<gene>
    <name evidence="1" type="primary">era</name>
    <name type="ordered locus">YpsIP31758_1137</name>
</gene>
<protein>
    <recommendedName>
        <fullName evidence="1">GTPase Era</fullName>
    </recommendedName>
</protein>
<keyword id="KW-0997">Cell inner membrane</keyword>
<keyword id="KW-1003">Cell membrane</keyword>
<keyword id="KW-0963">Cytoplasm</keyword>
<keyword id="KW-0342">GTP-binding</keyword>
<keyword id="KW-0472">Membrane</keyword>
<keyword id="KW-0547">Nucleotide-binding</keyword>
<keyword id="KW-0690">Ribosome biogenesis</keyword>
<keyword id="KW-0694">RNA-binding</keyword>
<keyword id="KW-0699">rRNA-binding</keyword>
<proteinExistence type="inferred from homology"/>
<evidence type="ECO:0000255" key="1">
    <source>
        <dbReference type="HAMAP-Rule" id="MF_00367"/>
    </source>
</evidence>
<evidence type="ECO:0000255" key="2">
    <source>
        <dbReference type="PROSITE-ProRule" id="PRU01050"/>
    </source>
</evidence>
<name>ERA_YERP3</name>